<sequence>MAIITRIEVQKRNNERYNIFIHQNGQDVYAFSVDEQVLIKQGLRKGLDIDAEQMKQILYEDEVQKTFNLALHYLSYRMRSVHEVRTYLKKKDREEPIIEHVLHRLTEQRLLDDHAFAEAFIQTKRATTSKGPLKLKQELAEKGVSEKTIEGALTTFSYEEQVEQVKAWLEKQKGRTFKGSSLAWKQKLSRQLLAKGYTSPVIEEAFADVPIKQEEEEEWEALKAFGEKAMRKYAGKKTGWELQQKVKQALYRKGFSLEMIERYLND</sequence>
<comment type="function">
    <text evidence="1">Modulates RecA activity.</text>
</comment>
<comment type="subcellular location">
    <subcellularLocation>
        <location evidence="2">Cytoplasm</location>
    </subcellularLocation>
</comment>
<comment type="similarity">
    <text evidence="2">Belongs to the RecX family.</text>
</comment>
<accession>Q9KEC9</accession>
<name>RECX_HALH5</name>
<keyword id="KW-0963">Cytoplasm</keyword>
<keyword id="KW-1185">Reference proteome</keyword>
<proteinExistence type="inferred from homology"/>
<dbReference type="EMBL" id="BA000004">
    <property type="protein sequence ID" value="BAB04643.1"/>
    <property type="molecule type" value="Genomic_DNA"/>
</dbReference>
<dbReference type="PIR" id="D83765">
    <property type="entry name" value="D83765"/>
</dbReference>
<dbReference type="RefSeq" id="WP_010897096.1">
    <property type="nucleotide sequence ID" value="NC_002570.2"/>
</dbReference>
<dbReference type="SMR" id="Q9KEC9"/>
<dbReference type="STRING" id="272558.gene:10726798"/>
<dbReference type="KEGG" id="bha:BH0924"/>
<dbReference type="eggNOG" id="COG2137">
    <property type="taxonomic scope" value="Bacteria"/>
</dbReference>
<dbReference type="HOGENOM" id="CLU_066607_4_0_9"/>
<dbReference type="OrthoDB" id="5421057at2"/>
<dbReference type="Proteomes" id="UP000001258">
    <property type="component" value="Chromosome"/>
</dbReference>
<dbReference type="GO" id="GO:0005737">
    <property type="term" value="C:cytoplasm"/>
    <property type="evidence" value="ECO:0007669"/>
    <property type="project" value="UniProtKB-SubCell"/>
</dbReference>
<dbReference type="GO" id="GO:0006282">
    <property type="term" value="P:regulation of DNA repair"/>
    <property type="evidence" value="ECO:0007669"/>
    <property type="project" value="UniProtKB-UniRule"/>
</dbReference>
<dbReference type="Gene3D" id="1.10.10.10">
    <property type="entry name" value="Winged helix-like DNA-binding domain superfamily/Winged helix DNA-binding domain"/>
    <property type="match status" value="4"/>
</dbReference>
<dbReference type="HAMAP" id="MF_01114">
    <property type="entry name" value="RecX"/>
    <property type="match status" value="1"/>
</dbReference>
<dbReference type="InterPro" id="IPR053926">
    <property type="entry name" value="RecX_HTH_1st"/>
</dbReference>
<dbReference type="InterPro" id="IPR053924">
    <property type="entry name" value="RecX_HTH_2nd"/>
</dbReference>
<dbReference type="InterPro" id="IPR053925">
    <property type="entry name" value="RecX_HTH_3rd"/>
</dbReference>
<dbReference type="InterPro" id="IPR003783">
    <property type="entry name" value="Regulatory_RecX"/>
</dbReference>
<dbReference type="InterPro" id="IPR036388">
    <property type="entry name" value="WH-like_DNA-bd_sf"/>
</dbReference>
<dbReference type="NCBIfam" id="NF010733">
    <property type="entry name" value="PRK14135.1"/>
    <property type="match status" value="1"/>
</dbReference>
<dbReference type="PANTHER" id="PTHR33602">
    <property type="entry name" value="REGULATORY PROTEIN RECX FAMILY PROTEIN"/>
    <property type="match status" value="1"/>
</dbReference>
<dbReference type="PANTHER" id="PTHR33602:SF1">
    <property type="entry name" value="REGULATORY PROTEIN RECX FAMILY PROTEIN"/>
    <property type="match status" value="1"/>
</dbReference>
<dbReference type="Pfam" id="PF21982">
    <property type="entry name" value="RecX_HTH1"/>
    <property type="match status" value="1"/>
</dbReference>
<dbReference type="Pfam" id="PF02631">
    <property type="entry name" value="RecX_HTH2"/>
    <property type="match status" value="1"/>
</dbReference>
<dbReference type="Pfam" id="PF21981">
    <property type="entry name" value="RecX_HTH3"/>
    <property type="match status" value="2"/>
</dbReference>
<evidence type="ECO:0000250" key="1"/>
<evidence type="ECO:0000305" key="2"/>
<organism>
    <name type="scientific">Halalkalibacterium halodurans (strain ATCC BAA-125 / DSM 18197 / FERM 7344 / JCM 9153 / C-125)</name>
    <name type="common">Bacillus halodurans</name>
    <dbReference type="NCBI Taxonomy" id="272558"/>
    <lineage>
        <taxon>Bacteria</taxon>
        <taxon>Bacillati</taxon>
        <taxon>Bacillota</taxon>
        <taxon>Bacilli</taxon>
        <taxon>Bacillales</taxon>
        <taxon>Bacillaceae</taxon>
        <taxon>Halalkalibacterium (ex Joshi et al. 2022)</taxon>
    </lineage>
</organism>
<protein>
    <recommendedName>
        <fullName>Regulatory protein RecX</fullName>
    </recommendedName>
</protein>
<reference key="1">
    <citation type="journal article" date="2000" name="Nucleic Acids Res.">
        <title>Complete genome sequence of the alkaliphilic bacterium Bacillus halodurans and genomic sequence comparison with Bacillus subtilis.</title>
        <authorList>
            <person name="Takami H."/>
            <person name="Nakasone K."/>
            <person name="Takaki Y."/>
            <person name="Maeno G."/>
            <person name="Sasaki R."/>
            <person name="Masui N."/>
            <person name="Fuji F."/>
            <person name="Hirama C."/>
            <person name="Nakamura Y."/>
            <person name="Ogasawara N."/>
            <person name="Kuhara S."/>
            <person name="Horikoshi K."/>
        </authorList>
    </citation>
    <scope>NUCLEOTIDE SEQUENCE [LARGE SCALE GENOMIC DNA]</scope>
    <source>
        <strain>ATCC BAA-125 / DSM 18197 / FERM 7344 / JCM 9153 / C-125</strain>
    </source>
</reference>
<feature type="chain" id="PRO_0000162418" description="Regulatory protein RecX">
    <location>
        <begin position="1"/>
        <end position="266"/>
    </location>
</feature>
<gene>
    <name type="primary">recX</name>
    <name type="ordered locus">BH0924</name>
</gene>